<comment type="function">
    <text evidence="1">Cell wall formation. Adds enolpyruvyl to UDP-N-acetylglucosamine.</text>
</comment>
<comment type="catalytic activity">
    <reaction evidence="1">
        <text>phosphoenolpyruvate + UDP-N-acetyl-alpha-D-glucosamine = UDP-N-acetyl-3-O-(1-carboxyvinyl)-alpha-D-glucosamine + phosphate</text>
        <dbReference type="Rhea" id="RHEA:18681"/>
        <dbReference type="ChEBI" id="CHEBI:43474"/>
        <dbReference type="ChEBI" id="CHEBI:57705"/>
        <dbReference type="ChEBI" id="CHEBI:58702"/>
        <dbReference type="ChEBI" id="CHEBI:68483"/>
        <dbReference type="EC" id="2.5.1.7"/>
    </reaction>
</comment>
<comment type="pathway">
    <text evidence="1">Cell wall biogenesis; peptidoglycan biosynthesis.</text>
</comment>
<comment type="subcellular location">
    <subcellularLocation>
        <location evidence="1">Cytoplasm</location>
    </subcellularLocation>
</comment>
<comment type="similarity">
    <text evidence="1">Belongs to the EPSP synthase family. MurA subfamily.</text>
</comment>
<name>MURA2_PROMA</name>
<protein>
    <recommendedName>
        <fullName evidence="1">UDP-N-acetylglucosamine 1-carboxyvinyltransferase 2</fullName>
        <ecNumber evidence="1">2.5.1.7</ecNumber>
    </recommendedName>
    <alternativeName>
        <fullName evidence="1">Enoylpyruvate transferase 2</fullName>
    </alternativeName>
    <alternativeName>
        <fullName evidence="1">UDP-N-acetylglucosamine enolpyruvyl transferase 2</fullName>
        <shortName evidence="1">EPT 2</shortName>
    </alternativeName>
</protein>
<organism>
    <name type="scientific">Prochlorococcus marinus (strain SARG / CCMP1375 / SS120)</name>
    <dbReference type="NCBI Taxonomy" id="167539"/>
    <lineage>
        <taxon>Bacteria</taxon>
        <taxon>Bacillati</taxon>
        <taxon>Cyanobacteriota</taxon>
        <taxon>Cyanophyceae</taxon>
        <taxon>Synechococcales</taxon>
        <taxon>Prochlorococcaceae</taxon>
        <taxon>Prochlorococcus</taxon>
    </lineage>
</organism>
<keyword id="KW-0131">Cell cycle</keyword>
<keyword id="KW-0132">Cell division</keyword>
<keyword id="KW-0133">Cell shape</keyword>
<keyword id="KW-0961">Cell wall biogenesis/degradation</keyword>
<keyword id="KW-0963">Cytoplasm</keyword>
<keyword id="KW-0573">Peptidoglycan synthesis</keyword>
<keyword id="KW-0670">Pyruvate</keyword>
<keyword id="KW-1185">Reference proteome</keyword>
<keyword id="KW-0808">Transferase</keyword>
<proteinExistence type="inferred from homology"/>
<accession>Q7VAC5</accession>
<evidence type="ECO:0000255" key="1">
    <source>
        <dbReference type="HAMAP-Rule" id="MF_00111"/>
    </source>
</evidence>
<feature type="chain" id="PRO_0000231240" description="UDP-N-acetylglucosamine 1-carboxyvinyltransferase 2">
    <location>
        <begin position="1"/>
        <end position="427"/>
    </location>
</feature>
<feature type="active site" description="Proton donor" evidence="1">
    <location>
        <position position="115"/>
    </location>
</feature>
<feature type="binding site" evidence="1">
    <location>
        <begin position="19"/>
        <end position="20"/>
    </location>
    <ligand>
        <name>phosphoenolpyruvate</name>
        <dbReference type="ChEBI" id="CHEBI:58702"/>
    </ligand>
</feature>
<feature type="binding site" evidence="1">
    <location>
        <position position="91"/>
    </location>
    <ligand>
        <name>UDP-N-acetyl-alpha-D-glucosamine</name>
        <dbReference type="ChEBI" id="CHEBI:57705"/>
    </ligand>
</feature>
<feature type="binding site" evidence="1">
    <location>
        <position position="307"/>
    </location>
    <ligand>
        <name>UDP-N-acetyl-alpha-D-glucosamine</name>
        <dbReference type="ChEBI" id="CHEBI:57705"/>
    </ligand>
</feature>
<feature type="binding site" evidence="1">
    <location>
        <position position="329"/>
    </location>
    <ligand>
        <name>UDP-N-acetyl-alpha-D-glucosamine</name>
        <dbReference type="ChEBI" id="CHEBI:57705"/>
    </ligand>
</feature>
<feature type="modified residue" description="2-(S-cysteinyl)pyruvic acid O-phosphothioketal" evidence="1">
    <location>
        <position position="115"/>
    </location>
</feature>
<dbReference type="EC" id="2.5.1.7" evidence="1"/>
<dbReference type="EMBL" id="AE017126">
    <property type="protein sequence ID" value="AAQ00583.1"/>
    <property type="molecule type" value="Genomic_DNA"/>
</dbReference>
<dbReference type="RefSeq" id="NP_875930.1">
    <property type="nucleotide sequence ID" value="NC_005042.1"/>
</dbReference>
<dbReference type="SMR" id="Q7VAC5"/>
<dbReference type="STRING" id="167539.Pro_1539"/>
<dbReference type="EnsemblBacteria" id="AAQ00583">
    <property type="protein sequence ID" value="AAQ00583"/>
    <property type="gene ID" value="Pro_1539"/>
</dbReference>
<dbReference type="KEGG" id="pma:Pro_1539"/>
<dbReference type="PATRIC" id="fig|167539.5.peg.1620"/>
<dbReference type="eggNOG" id="COG0766">
    <property type="taxonomic scope" value="Bacteria"/>
</dbReference>
<dbReference type="HOGENOM" id="CLU_027387_0_0_3"/>
<dbReference type="OrthoDB" id="9803760at2"/>
<dbReference type="UniPathway" id="UPA00219"/>
<dbReference type="Proteomes" id="UP000001420">
    <property type="component" value="Chromosome"/>
</dbReference>
<dbReference type="GO" id="GO:0005737">
    <property type="term" value="C:cytoplasm"/>
    <property type="evidence" value="ECO:0007669"/>
    <property type="project" value="UniProtKB-SubCell"/>
</dbReference>
<dbReference type="GO" id="GO:0008760">
    <property type="term" value="F:UDP-N-acetylglucosamine 1-carboxyvinyltransferase activity"/>
    <property type="evidence" value="ECO:0007669"/>
    <property type="project" value="UniProtKB-UniRule"/>
</dbReference>
<dbReference type="GO" id="GO:0051301">
    <property type="term" value="P:cell division"/>
    <property type="evidence" value="ECO:0007669"/>
    <property type="project" value="UniProtKB-KW"/>
</dbReference>
<dbReference type="GO" id="GO:0071555">
    <property type="term" value="P:cell wall organization"/>
    <property type="evidence" value="ECO:0007669"/>
    <property type="project" value="UniProtKB-KW"/>
</dbReference>
<dbReference type="GO" id="GO:0009252">
    <property type="term" value="P:peptidoglycan biosynthetic process"/>
    <property type="evidence" value="ECO:0007669"/>
    <property type="project" value="UniProtKB-UniRule"/>
</dbReference>
<dbReference type="GO" id="GO:0008360">
    <property type="term" value="P:regulation of cell shape"/>
    <property type="evidence" value="ECO:0007669"/>
    <property type="project" value="UniProtKB-KW"/>
</dbReference>
<dbReference type="GO" id="GO:0019277">
    <property type="term" value="P:UDP-N-acetylgalactosamine biosynthetic process"/>
    <property type="evidence" value="ECO:0007669"/>
    <property type="project" value="InterPro"/>
</dbReference>
<dbReference type="CDD" id="cd01555">
    <property type="entry name" value="UdpNAET"/>
    <property type="match status" value="1"/>
</dbReference>
<dbReference type="Gene3D" id="3.65.10.10">
    <property type="entry name" value="Enolpyruvate transferase domain"/>
    <property type="match status" value="2"/>
</dbReference>
<dbReference type="HAMAP" id="MF_00111">
    <property type="entry name" value="MurA"/>
    <property type="match status" value="1"/>
</dbReference>
<dbReference type="InterPro" id="IPR001986">
    <property type="entry name" value="Enolpyruvate_Tfrase_dom"/>
</dbReference>
<dbReference type="InterPro" id="IPR036968">
    <property type="entry name" value="Enolpyruvate_Tfrase_sf"/>
</dbReference>
<dbReference type="InterPro" id="IPR050068">
    <property type="entry name" value="MurA_subfamily"/>
</dbReference>
<dbReference type="InterPro" id="IPR013792">
    <property type="entry name" value="RNA3'P_cycl/enolpyr_Trfase_a/b"/>
</dbReference>
<dbReference type="InterPro" id="IPR005750">
    <property type="entry name" value="UDP_GlcNAc_COvinyl_MurA"/>
</dbReference>
<dbReference type="NCBIfam" id="TIGR01072">
    <property type="entry name" value="murA"/>
    <property type="match status" value="1"/>
</dbReference>
<dbReference type="NCBIfam" id="NF006873">
    <property type="entry name" value="PRK09369.1"/>
    <property type="match status" value="1"/>
</dbReference>
<dbReference type="PANTHER" id="PTHR43783">
    <property type="entry name" value="UDP-N-ACETYLGLUCOSAMINE 1-CARBOXYVINYLTRANSFERASE"/>
    <property type="match status" value="1"/>
</dbReference>
<dbReference type="PANTHER" id="PTHR43783:SF1">
    <property type="entry name" value="UDP-N-ACETYLGLUCOSAMINE 1-CARBOXYVINYLTRANSFERASE"/>
    <property type="match status" value="1"/>
</dbReference>
<dbReference type="Pfam" id="PF00275">
    <property type="entry name" value="EPSP_synthase"/>
    <property type="match status" value="1"/>
</dbReference>
<dbReference type="SUPFAM" id="SSF55205">
    <property type="entry name" value="EPT/RTPC-like"/>
    <property type="match status" value="1"/>
</dbReference>
<gene>
    <name evidence="1" type="primary">murA2</name>
    <name type="synonym">murA</name>
    <name type="ordered locus">Pro_1539</name>
</gene>
<sequence length="427" mass="45699">MQVLESQKLSGHIRVSGAKNSSLVLMAAALLADRSVFLSNVPLLTDVEVMSKLLVSMGVELRRNKNQLEIMTSGLSLFSKDLSCEAFHSLRASFFCIGPLLARFGEAKIPLPGGCRIGARPIDEHIQALKALGARVEIQNDYVVAKAISPQKRLIGARIRFNCKSVGATETILMAATLSQGTTILENTAEEPEIQDLATMLNEMGAKIQGAGTSQITIEGVDRLKGCSYTVMPDRIEAGTFLVAAAITRSPLTISPVVPEHLEAVILKLQECGCLIEYSGNTLSVIPRKNLQAVDITTRPFPGFPTDLQAPFMALMTTVKGISKIQETVFENRMQHVGELQRMGATIVLEGNTAVVIGGNNLKATSVTGGDLRSCAAMVLASLAANGTSVIQGLEHLDRGYEDFAEKLNAVGANISRTHSVPLSSQE</sequence>
<reference key="1">
    <citation type="journal article" date="2003" name="Proc. Natl. Acad. Sci. U.S.A.">
        <title>Genome sequence of the cyanobacterium Prochlorococcus marinus SS120, a nearly minimal oxyphototrophic genome.</title>
        <authorList>
            <person name="Dufresne A."/>
            <person name="Salanoubat M."/>
            <person name="Partensky F."/>
            <person name="Artiguenave F."/>
            <person name="Axmann I.M."/>
            <person name="Barbe V."/>
            <person name="Duprat S."/>
            <person name="Galperin M.Y."/>
            <person name="Koonin E.V."/>
            <person name="Le Gall F."/>
            <person name="Makarova K.S."/>
            <person name="Ostrowski M."/>
            <person name="Oztas S."/>
            <person name="Robert C."/>
            <person name="Rogozin I.B."/>
            <person name="Scanlan D.J."/>
            <person name="Tandeau de Marsac N."/>
            <person name="Weissenbach J."/>
            <person name="Wincker P."/>
            <person name="Wolf Y.I."/>
            <person name="Hess W.R."/>
        </authorList>
    </citation>
    <scope>NUCLEOTIDE SEQUENCE [LARGE SCALE GENOMIC DNA]</scope>
    <source>
        <strain>SARG / CCMP1375 / SS120</strain>
    </source>
</reference>